<comment type="function">
    <text evidence="4 5 6 10">Involved in delta-9 desaturation of fatty acids (Probable) (PubMed:15240892). Plays a role in the production of very-long-chain monounsaturated fatty acids (VLCMUFAs) in seed lipids and in membrane phospholipids and sphingolipids (PubMed:23175755). Acts as C-16:0 desaturase for monogalactosyl diacylglycerol (MGDG) and phosphatidylglycerol (PG) (PubMed:23585650). Is an essential component for cold adaptation (PubMed:23585650). Is essential to adjust the acyl composition of organelle membrane lipid composition in response to cold stress (PubMed:23585650).</text>
</comment>
<comment type="catalytic activity">
    <reaction evidence="5">
        <text>a 1-hexacosanoyl-2-acyl-phosphoglycerolipid + 2 Fe(II)-[cytochrome b5] + O2 + 2 H(+) = a 1-[(17Z)-hexacos-17-enoyl]-2-acyl-phosphoglycerolipid + 2 Fe(III)-[cytochrome b5] + 2 H2O</text>
        <dbReference type="Rhea" id="RHEA:57600"/>
        <dbReference type="Rhea" id="RHEA-COMP:10438"/>
        <dbReference type="Rhea" id="RHEA-COMP:10439"/>
        <dbReference type="ChEBI" id="CHEBI:15377"/>
        <dbReference type="ChEBI" id="CHEBI:15378"/>
        <dbReference type="ChEBI" id="CHEBI:15379"/>
        <dbReference type="ChEBI" id="CHEBI:29033"/>
        <dbReference type="ChEBI" id="CHEBI:29034"/>
        <dbReference type="ChEBI" id="CHEBI:142019"/>
        <dbReference type="ChEBI" id="CHEBI:142020"/>
        <dbReference type="EC" id="1.14.19.75"/>
    </reaction>
</comment>
<comment type="catalytic activity">
    <reaction evidence="5">
        <text>a 1-tetracosanoyl-2-acyl-phosphoglycerolipid + 2 Fe(II)-[cytochrome b5] + O2 + 2 H(+) = a 1-[(15Z)-tetracos-15-enoyl]-2-acyl-phosphoglycerolipid + 2 Fe(III)-[cytochrome b5] + 2 H2O</text>
        <dbReference type="Rhea" id="RHEA:57604"/>
        <dbReference type="Rhea" id="RHEA-COMP:10438"/>
        <dbReference type="Rhea" id="RHEA-COMP:10439"/>
        <dbReference type="ChEBI" id="CHEBI:15377"/>
        <dbReference type="ChEBI" id="CHEBI:15378"/>
        <dbReference type="ChEBI" id="CHEBI:15379"/>
        <dbReference type="ChEBI" id="CHEBI:29033"/>
        <dbReference type="ChEBI" id="CHEBI:29034"/>
        <dbReference type="ChEBI" id="CHEBI:142021"/>
        <dbReference type="ChEBI" id="CHEBI:142022"/>
        <dbReference type="EC" id="1.14.19.75"/>
    </reaction>
</comment>
<comment type="cofactor">
    <cofactor evidence="1">
        <name>Fe cation</name>
        <dbReference type="ChEBI" id="CHEBI:24875"/>
    </cofactor>
</comment>
<comment type="pathway">
    <text evidence="9">Lipid metabolism; polyunsaturated fatty acid biosynthesis.</text>
</comment>
<comment type="subcellular location">
    <subcellularLocation>
        <location evidence="5">Endoplasmic reticulum membrane</location>
        <topology evidence="2">Multi-pass membrane protein</topology>
    </subcellularLocation>
</comment>
<comment type="tissue specificity">
    <text evidence="7">Strongly expressed in flowers, roots, leaves, seedpods, and inflorescence meristems.</text>
</comment>
<comment type="induction">
    <text evidence="7">Up-regulated by cold.</text>
</comment>
<comment type="domain">
    <text evidence="1">The histidine box domains may contain the active site and/or be involved in metal ion binding.</text>
</comment>
<comment type="disruption phenotype">
    <text evidence="6">No visible phenotype under normal growth conditions, but mutant plant display a dwarf and sterile phenotype when grown at 6 degrees Celsius and also show increased sensitivity to freezing temperature.</text>
</comment>
<comment type="miscellaneous">
    <text evidence="4">Substrate specificity shifts from delta-9 to delta-7 desaturation when the protein is retargeted to the chloroplast.</text>
</comment>
<comment type="similarity">
    <text evidence="9">Belongs to the fatty acid desaturase type 1 family.</text>
</comment>
<name>ADS2_ARATH</name>
<sequence>MSVTSTVEENHQKNPSTPAAVEEKKKRRWVFWDRRWRRLDYVKFSASFTVHSLALLAPFYFTWSALWVTFLFYTIGGLGITVSYHRNLAHRSFKVPKWLEYLLAYCALLAIQGDPIDWVSTHRYHHQFTDSERDPHSPKEGFWFSHLLWIYDSAYLVSKCGRRANVEDLKRQWFYRFLQKTVLFHILGLGFFLFYLGGMSFVTWGMGVGAALEVHVTCLINSLCHIWGTRTWKTNDTSRNVWWLSVFSFGESWHNNHHAFESSARQGLEWWQIDISWYIVRFFEIIGLATDVKVPTEAQRRRMAIVR</sequence>
<proteinExistence type="evidence at protein level"/>
<dbReference type="EC" id="1.14.19.75" evidence="5"/>
<dbReference type="EMBL" id="D88537">
    <property type="protein sequence ID" value="BAA25181.1"/>
    <property type="molecule type" value="mRNA"/>
</dbReference>
<dbReference type="EMBL" id="AC007169">
    <property type="protein sequence ID" value="AAD26482.2"/>
    <property type="molecule type" value="Genomic_DNA"/>
</dbReference>
<dbReference type="EMBL" id="CP002685">
    <property type="protein sequence ID" value="AEC08533.1"/>
    <property type="molecule type" value="Genomic_DNA"/>
</dbReference>
<dbReference type="EMBL" id="CP002685">
    <property type="protein sequence ID" value="ANM61591.1"/>
    <property type="molecule type" value="Genomic_DNA"/>
</dbReference>
<dbReference type="EMBL" id="AY045918">
    <property type="protein sequence ID" value="AAK76592.1"/>
    <property type="molecule type" value="mRNA"/>
</dbReference>
<dbReference type="EMBL" id="AY079388">
    <property type="protein sequence ID" value="AAL85119.1"/>
    <property type="molecule type" value="mRNA"/>
</dbReference>
<dbReference type="EMBL" id="AY086154">
    <property type="protein sequence ID" value="AAM63359.1"/>
    <property type="molecule type" value="mRNA"/>
</dbReference>
<dbReference type="PIR" id="G84719">
    <property type="entry name" value="G84719"/>
</dbReference>
<dbReference type="PIR" id="T52109">
    <property type="entry name" value="T52109"/>
</dbReference>
<dbReference type="RefSeq" id="NP_001323798.1">
    <property type="nucleotide sequence ID" value="NM_001336328.1"/>
</dbReference>
<dbReference type="RefSeq" id="NP_565721.1">
    <property type="nucleotide sequence ID" value="NM_128693.5"/>
</dbReference>
<dbReference type="SMR" id="Q9SID2"/>
<dbReference type="BioGRID" id="3041">
    <property type="interactions" value="35"/>
</dbReference>
<dbReference type="FunCoup" id="Q9SID2">
    <property type="interactions" value="315"/>
</dbReference>
<dbReference type="IntAct" id="Q9SID2">
    <property type="interactions" value="34"/>
</dbReference>
<dbReference type="STRING" id="3702.Q9SID2"/>
<dbReference type="iPTMnet" id="Q9SID2"/>
<dbReference type="PaxDb" id="3702-AT2G31360.1"/>
<dbReference type="ProteomicsDB" id="244738"/>
<dbReference type="EnsemblPlants" id="AT2G31360.1">
    <property type="protein sequence ID" value="AT2G31360.1"/>
    <property type="gene ID" value="AT2G31360"/>
</dbReference>
<dbReference type="EnsemblPlants" id="AT2G31360.2">
    <property type="protein sequence ID" value="AT2G31360.2"/>
    <property type="gene ID" value="AT2G31360"/>
</dbReference>
<dbReference type="GeneID" id="817694"/>
<dbReference type="Gramene" id="AT2G31360.1">
    <property type="protein sequence ID" value="AT2G31360.1"/>
    <property type="gene ID" value="AT2G31360"/>
</dbReference>
<dbReference type="Gramene" id="AT2G31360.2">
    <property type="protein sequence ID" value="AT2G31360.2"/>
    <property type="gene ID" value="AT2G31360"/>
</dbReference>
<dbReference type="KEGG" id="ath:AT2G31360"/>
<dbReference type="Araport" id="AT2G31360"/>
<dbReference type="TAIR" id="AT2G31360">
    <property type="gene designation" value="ADS2"/>
</dbReference>
<dbReference type="eggNOG" id="KOG1600">
    <property type="taxonomic scope" value="Eukaryota"/>
</dbReference>
<dbReference type="HOGENOM" id="CLU_027359_1_0_1"/>
<dbReference type="InParanoid" id="Q9SID2"/>
<dbReference type="OMA" id="WHISFTT"/>
<dbReference type="OrthoDB" id="10260134at2759"/>
<dbReference type="PhylomeDB" id="Q9SID2"/>
<dbReference type="BioCyc" id="ARA:AT2G31360-MONOMER"/>
<dbReference type="BioCyc" id="MetaCyc:AT2G31360-MONOMER"/>
<dbReference type="BRENDA" id="1.14.19.75">
    <property type="organism ID" value="399"/>
</dbReference>
<dbReference type="UniPathway" id="UPA00658"/>
<dbReference type="PRO" id="PR:Q9SID2"/>
<dbReference type="Proteomes" id="UP000006548">
    <property type="component" value="Chromosome 2"/>
</dbReference>
<dbReference type="ExpressionAtlas" id="Q9SID2">
    <property type="expression patterns" value="baseline and differential"/>
</dbReference>
<dbReference type="GO" id="GO:0005783">
    <property type="term" value="C:endoplasmic reticulum"/>
    <property type="evidence" value="ECO:0007005"/>
    <property type="project" value="TAIR"/>
</dbReference>
<dbReference type="GO" id="GO:0005789">
    <property type="term" value="C:endoplasmic reticulum membrane"/>
    <property type="evidence" value="ECO:0000314"/>
    <property type="project" value="TAIR"/>
</dbReference>
<dbReference type="GO" id="GO:0046872">
    <property type="term" value="F:metal ion binding"/>
    <property type="evidence" value="ECO:0007669"/>
    <property type="project" value="UniProtKB-KW"/>
</dbReference>
<dbReference type="GO" id="GO:0016717">
    <property type="term" value="F:oxidoreductase activity, acting on paired donors, with oxidation of a pair of donors resulting in the reduction of molecular oxygen to two molecules of water"/>
    <property type="evidence" value="ECO:0007669"/>
    <property type="project" value="InterPro"/>
</dbReference>
<dbReference type="GO" id="GO:0010114">
    <property type="term" value="P:response to red light"/>
    <property type="evidence" value="ECO:0000270"/>
    <property type="project" value="UniProtKB"/>
</dbReference>
<dbReference type="GO" id="GO:0006636">
    <property type="term" value="P:unsaturated fatty acid biosynthetic process"/>
    <property type="evidence" value="ECO:0007669"/>
    <property type="project" value="UniProtKB-UniPathway"/>
</dbReference>
<dbReference type="GO" id="GO:0042761">
    <property type="term" value="P:very long-chain fatty acid biosynthetic process"/>
    <property type="evidence" value="ECO:0000315"/>
    <property type="project" value="TAIR"/>
</dbReference>
<dbReference type="CDD" id="cd03505">
    <property type="entry name" value="Delta9-FADS-like"/>
    <property type="match status" value="1"/>
</dbReference>
<dbReference type="InterPro" id="IPR015876">
    <property type="entry name" value="Acyl-CoA_DS"/>
</dbReference>
<dbReference type="InterPro" id="IPR005804">
    <property type="entry name" value="FA_desaturase_dom"/>
</dbReference>
<dbReference type="PANTHER" id="PTHR11351">
    <property type="entry name" value="ACYL-COA DESATURASE"/>
    <property type="match status" value="1"/>
</dbReference>
<dbReference type="PANTHER" id="PTHR11351:SF68">
    <property type="entry name" value="DELTA-9 ACYL-LIPID DESATURASE 2"/>
    <property type="match status" value="1"/>
</dbReference>
<dbReference type="Pfam" id="PF00487">
    <property type="entry name" value="FA_desaturase"/>
    <property type="match status" value="1"/>
</dbReference>
<dbReference type="PRINTS" id="PR00075">
    <property type="entry name" value="FACDDSATRASE"/>
</dbReference>
<organism>
    <name type="scientific">Arabidopsis thaliana</name>
    <name type="common">Mouse-ear cress</name>
    <dbReference type="NCBI Taxonomy" id="3702"/>
    <lineage>
        <taxon>Eukaryota</taxon>
        <taxon>Viridiplantae</taxon>
        <taxon>Streptophyta</taxon>
        <taxon>Embryophyta</taxon>
        <taxon>Tracheophyta</taxon>
        <taxon>Spermatophyta</taxon>
        <taxon>Magnoliopsida</taxon>
        <taxon>eudicotyledons</taxon>
        <taxon>Gunneridae</taxon>
        <taxon>Pentapetalae</taxon>
        <taxon>rosids</taxon>
        <taxon>malvids</taxon>
        <taxon>Brassicales</taxon>
        <taxon>Brassicaceae</taxon>
        <taxon>Camelineae</taxon>
        <taxon>Arabidopsis</taxon>
    </lineage>
</organism>
<reference key="1">
    <citation type="journal article" date="1998" name="Plant Cell Physiol.">
        <title>Characterization of delta 9 acyl-lipid desaturase homologues from Arabidopsis thaliana.</title>
        <authorList>
            <person name="Fukuchi-Mizutani M."/>
            <person name="Tasaka Y."/>
            <person name="Tanaka Y."/>
            <person name="Ashikari T."/>
            <person name="Kusumi T."/>
            <person name="Murata N."/>
        </authorList>
    </citation>
    <scope>NUCLEOTIDE SEQUENCE [MRNA]</scope>
    <scope>FUNCTION</scope>
    <scope>TISSUE SPECIFICITY</scope>
    <scope>INDUCTION</scope>
</reference>
<reference key="2">
    <citation type="journal article" date="1999" name="Nature">
        <title>Sequence and analysis of chromosome 2 of the plant Arabidopsis thaliana.</title>
        <authorList>
            <person name="Lin X."/>
            <person name="Kaul S."/>
            <person name="Rounsley S.D."/>
            <person name="Shea T.P."/>
            <person name="Benito M.-I."/>
            <person name="Town C.D."/>
            <person name="Fujii C.Y."/>
            <person name="Mason T.M."/>
            <person name="Bowman C.L."/>
            <person name="Barnstead M.E."/>
            <person name="Feldblyum T.V."/>
            <person name="Buell C.R."/>
            <person name="Ketchum K.A."/>
            <person name="Lee J.J."/>
            <person name="Ronning C.M."/>
            <person name="Koo H.L."/>
            <person name="Moffat K.S."/>
            <person name="Cronin L.A."/>
            <person name="Shen M."/>
            <person name="Pai G."/>
            <person name="Van Aken S."/>
            <person name="Umayam L."/>
            <person name="Tallon L.J."/>
            <person name="Gill J.E."/>
            <person name="Adams M.D."/>
            <person name="Carrera A.J."/>
            <person name="Creasy T.H."/>
            <person name="Goodman H.M."/>
            <person name="Somerville C.R."/>
            <person name="Copenhaver G.P."/>
            <person name="Preuss D."/>
            <person name="Nierman W.C."/>
            <person name="White O."/>
            <person name="Eisen J.A."/>
            <person name="Salzberg S.L."/>
            <person name="Fraser C.M."/>
            <person name="Venter J.C."/>
        </authorList>
    </citation>
    <scope>NUCLEOTIDE SEQUENCE [LARGE SCALE GENOMIC DNA]</scope>
    <source>
        <strain>cv. Columbia</strain>
    </source>
</reference>
<reference key="3">
    <citation type="journal article" date="2017" name="Plant J.">
        <title>Araport11: a complete reannotation of the Arabidopsis thaliana reference genome.</title>
        <authorList>
            <person name="Cheng C.Y."/>
            <person name="Krishnakumar V."/>
            <person name="Chan A.P."/>
            <person name="Thibaud-Nissen F."/>
            <person name="Schobel S."/>
            <person name="Town C.D."/>
        </authorList>
    </citation>
    <scope>GENOME REANNOTATION</scope>
    <source>
        <strain>cv. Columbia</strain>
    </source>
</reference>
<reference key="4">
    <citation type="journal article" date="2003" name="Science">
        <title>Empirical analysis of transcriptional activity in the Arabidopsis genome.</title>
        <authorList>
            <person name="Yamada K."/>
            <person name="Lim J."/>
            <person name="Dale J.M."/>
            <person name="Chen H."/>
            <person name="Shinn P."/>
            <person name="Palm C.J."/>
            <person name="Southwick A.M."/>
            <person name="Wu H.C."/>
            <person name="Kim C.J."/>
            <person name="Nguyen M."/>
            <person name="Pham P.K."/>
            <person name="Cheuk R.F."/>
            <person name="Karlin-Newmann G."/>
            <person name="Liu S.X."/>
            <person name="Lam B."/>
            <person name="Sakano H."/>
            <person name="Wu T."/>
            <person name="Yu G."/>
            <person name="Miranda M."/>
            <person name="Quach H.L."/>
            <person name="Tripp M."/>
            <person name="Chang C.H."/>
            <person name="Lee J.M."/>
            <person name="Toriumi M.J."/>
            <person name="Chan M.M."/>
            <person name="Tang C.C."/>
            <person name="Onodera C.S."/>
            <person name="Deng J.M."/>
            <person name="Akiyama K."/>
            <person name="Ansari Y."/>
            <person name="Arakawa T."/>
            <person name="Banh J."/>
            <person name="Banno F."/>
            <person name="Bowser L."/>
            <person name="Brooks S.Y."/>
            <person name="Carninci P."/>
            <person name="Chao Q."/>
            <person name="Choy N."/>
            <person name="Enju A."/>
            <person name="Goldsmith A.D."/>
            <person name="Gurjal M."/>
            <person name="Hansen N.F."/>
            <person name="Hayashizaki Y."/>
            <person name="Johnson-Hopson C."/>
            <person name="Hsuan V.W."/>
            <person name="Iida K."/>
            <person name="Karnes M."/>
            <person name="Khan S."/>
            <person name="Koesema E."/>
            <person name="Ishida J."/>
            <person name="Jiang P.X."/>
            <person name="Jones T."/>
            <person name="Kawai J."/>
            <person name="Kamiya A."/>
            <person name="Meyers C."/>
            <person name="Nakajima M."/>
            <person name="Narusaka M."/>
            <person name="Seki M."/>
            <person name="Sakurai T."/>
            <person name="Satou M."/>
            <person name="Tamse R."/>
            <person name="Vaysberg M."/>
            <person name="Wallender E.K."/>
            <person name="Wong C."/>
            <person name="Yamamura Y."/>
            <person name="Yuan S."/>
            <person name="Shinozaki K."/>
            <person name="Davis R.W."/>
            <person name="Theologis A."/>
            <person name="Ecker J.R."/>
        </authorList>
    </citation>
    <scope>NUCLEOTIDE SEQUENCE [LARGE SCALE MRNA]</scope>
    <source>
        <strain>cv. Columbia</strain>
    </source>
</reference>
<reference key="5">
    <citation type="submission" date="2002-03" db="EMBL/GenBank/DDBJ databases">
        <title>Full-length cDNA from Arabidopsis thaliana.</title>
        <authorList>
            <person name="Brover V.V."/>
            <person name="Troukhan M.E."/>
            <person name="Alexandrov N.A."/>
            <person name="Lu Y.-P."/>
            <person name="Flavell R.B."/>
            <person name="Feldmann K.A."/>
        </authorList>
    </citation>
    <scope>NUCLEOTIDE SEQUENCE [LARGE SCALE MRNA]</scope>
</reference>
<reference key="6">
    <citation type="journal article" date="2004" name="Proc. Natl. Acad. Sci. U.S.A.">
        <title>Switching desaturase enzyme specificity by alternate subcellular targeting.</title>
        <authorList>
            <person name="Heilmann I."/>
            <person name="Pidkowich M.S."/>
            <person name="Girke T."/>
            <person name="Shanklin J."/>
        </authorList>
    </citation>
    <scope>FUNCTION</scope>
    <scope>SPECIFICITY</scope>
</reference>
<reference key="7">
    <citation type="journal article" date="2013" name="Plant Physiol.">
        <title>Involvement of Arabidopsis ACYL-COENZYME A DESATURASE-LIKE2 (At2g31360) in the biosynthesis of the very-long-chain monounsaturated fatty acid components of membrane lipids.</title>
        <authorList>
            <person name="Smith M.A."/>
            <person name="Dauk M."/>
            <person name="Ramadan H."/>
            <person name="Yang H."/>
            <person name="Seamons L.E."/>
            <person name="Haslam R.P."/>
            <person name="Beaudoin F."/>
            <person name="Ramirez-Erosa I."/>
            <person name="Forseille L."/>
        </authorList>
    </citation>
    <scope>FUNCTION</scope>
    <scope>CATALYTIC ACTIVITY</scope>
    <scope>SUBCELLULAR LOCATION</scope>
</reference>
<reference key="8">
    <citation type="journal article" date="2013" name="Plant Cell">
        <title>ACYL-LIPID DESATURASE2 is required for chilling and freezing tolerance in Arabidopsis.</title>
        <authorList>
            <person name="Chen M."/>
            <person name="Thelen J.J."/>
        </authorList>
    </citation>
    <scope>FUNCTION</scope>
    <scope>DISRUPTION PHENOTYPE</scope>
</reference>
<protein>
    <recommendedName>
        <fullName evidence="8">Delta-9 acyl-lipid desaturase 2</fullName>
        <ecNumber evidence="5">1.14.19.75</ecNumber>
    </recommendedName>
</protein>
<evidence type="ECO:0000250" key="1">
    <source>
        <dbReference type="UniProtKB" id="O00767"/>
    </source>
</evidence>
<evidence type="ECO:0000255" key="2"/>
<evidence type="ECO:0000256" key="3">
    <source>
        <dbReference type="SAM" id="MobiDB-lite"/>
    </source>
</evidence>
<evidence type="ECO:0000269" key="4">
    <source>
    </source>
</evidence>
<evidence type="ECO:0000269" key="5">
    <source>
    </source>
</evidence>
<evidence type="ECO:0000269" key="6">
    <source>
    </source>
</evidence>
<evidence type="ECO:0000269" key="7">
    <source>
    </source>
</evidence>
<evidence type="ECO:0000303" key="8">
    <source>
    </source>
</evidence>
<evidence type="ECO:0000305" key="9"/>
<evidence type="ECO:0000305" key="10">
    <source>
    </source>
</evidence>
<evidence type="ECO:0000312" key="11">
    <source>
        <dbReference type="Araport" id="AT2G31360"/>
    </source>
</evidence>
<evidence type="ECO:0000312" key="12">
    <source>
        <dbReference type="EMBL" id="AAD26482.2"/>
    </source>
</evidence>
<feature type="chain" id="PRO_0000185426" description="Delta-9 acyl-lipid desaturase 2">
    <location>
        <begin position="1"/>
        <end position="307"/>
    </location>
</feature>
<feature type="transmembrane region" description="Helical" evidence="2">
    <location>
        <begin position="53"/>
        <end position="73"/>
    </location>
</feature>
<feature type="transmembrane region" description="Helical" evidence="2">
    <location>
        <begin position="99"/>
        <end position="119"/>
    </location>
</feature>
<feature type="transmembrane region" description="Helical" evidence="2">
    <location>
        <begin position="182"/>
        <end position="202"/>
    </location>
</feature>
<feature type="transmembrane region" description="Helical" evidence="2">
    <location>
        <begin position="204"/>
        <end position="224"/>
    </location>
</feature>
<feature type="region of interest" description="Disordered" evidence="3">
    <location>
        <begin position="1"/>
        <end position="21"/>
    </location>
</feature>
<feature type="short sequence motif" description="Histidine box-1" evidence="1">
    <location>
        <begin position="85"/>
        <end position="90"/>
    </location>
</feature>
<feature type="short sequence motif" description="Histidine box-2" evidence="1">
    <location>
        <begin position="122"/>
        <end position="126"/>
    </location>
</feature>
<feature type="short sequence motif" description="Histidine box-3" evidence="1">
    <location>
        <begin position="254"/>
        <end position="258"/>
    </location>
</feature>
<feature type="compositionally biased region" description="Polar residues" evidence="3">
    <location>
        <begin position="1"/>
        <end position="17"/>
    </location>
</feature>
<feature type="binding site" evidence="1">
    <location>
        <position position="85"/>
    </location>
    <ligand>
        <name>Fe cation</name>
        <dbReference type="ChEBI" id="CHEBI:24875"/>
        <label>1</label>
    </ligand>
</feature>
<feature type="binding site" evidence="1">
    <location>
        <position position="90"/>
    </location>
    <ligand>
        <name>Fe cation</name>
        <dbReference type="ChEBI" id="CHEBI:24875"/>
        <label>1</label>
    </ligand>
</feature>
<feature type="binding site" evidence="1">
    <location>
        <position position="122"/>
    </location>
    <ligand>
        <name>Fe cation</name>
        <dbReference type="ChEBI" id="CHEBI:24875"/>
        <label>1</label>
    </ligand>
</feature>
<feature type="binding site" evidence="1">
    <location>
        <position position="125"/>
    </location>
    <ligand>
        <name>Fe cation</name>
        <dbReference type="ChEBI" id="CHEBI:24875"/>
        <label>2</label>
    </ligand>
</feature>
<feature type="binding site" evidence="1">
    <location>
        <position position="126"/>
    </location>
    <ligand>
        <name>Fe cation</name>
        <dbReference type="ChEBI" id="CHEBI:24875"/>
        <label>1</label>
    </ligand>
</feature>
<feature type="binding site" evidence="1">
    <location>
        <position position="225"/>
    </location>
    <ligand>
        <name>Fe cation</name>
        <dbReference type="ChEBI" id="CHEBI:24875"/>
        <label>2</label>
    </ligand>
</feature>
<feature type="binding site" evidence="1">
    <location>
        <position position="254"/>
    </location>
    <ligand>
        <name>Fe cation</name>
        <dbReference type="ChEBI" id="CHEBI:24875"/>
        <label>2</label>
    </ligand>
</feature>
<feature type="binding site" evidence="1">
    <location>
        <position position="257"/>
    </location>
    <ligand>
        <name>Fe cation</name>
        <dbReference type="ChEBI" id="CHEBI:24875"/>
        <label>1</label>
    </ligand>
</feature>
<feature type="binding site" evidence="1">
    <location>
        <position position="258"/>
    </location>
    <ligand>
        <name>Fe cation</name>
        <dbReference type="ChEBI" id="CHEBI:24875"/>
        <label>2</label>
    </ligand>
</feature>
<feature type="sequence conflict" description="In Ref. 5; AAM63359." evidence="9" ref="5">
    <original>E</original>
    <variation>EE</variation>
    <location>
        <position position="23"/>
    </location>
</feature>
<feature type="sequence conflict" description="In Ref. 5; AAM63359." evidence="9" ref="5">
    <original>V</original>
    <variation>L</variation>
    <location>
        <position position="214"/>
    </location>
</feature>
<feature type="sequence conflict" description="In Ref. 5; AAM63359." evidence="9" ref="5">
    <original>E</original>
    <variation>K</variation>
    <location>
        <position position="261"/>
    </location>
</feature>
<gene>
    <name evidence="8" type="primary">ADS2</name>
    <name evidence="11" type="ordered locus">At2g31360</name>
    <name evidence="12" type="ORF">T28P16.15</name>
</gene>
<accession>Q9SID2</accession>
<accession>O65798</accession>
<accession>Q8LD80</accession>
<keyword id="KW-0256">Endoplasmic reticulum</keyword>
<keyword id="KW-0275">Fatty acid biosynthesis</keyword>
<keyword id="KW-0276">Fatty acid metabolism</keyword>
<keyword id="KW-0408">Iron</keyword>
<keyword id="KW-0444">Lipid biosynthesis</keyword>
<keyword id="KW-0443">Lipid metabolism</keyword>
<keyword id="KW-0472">Membrane</keyword>
<keyword id="KW-0479">Metal-binding</keyword>
<keyword id="KW-0560">Oxidoreductase</keyword>
<keyword id="KW-1185">Reference proteome</keyword>
<keyword id="KW-0346">Stress response</keyword>
<keyword id="KW-0812">Transmembrane</keyword>
<keyword id="KW-1133">Transmembrane helix</keyword>